<evidence type="ECO:0000250" key="1"/>
<evidence type="ECO:0000255" key="2">
    <source>
        <dbReference type="PROSITE-ProRule" id="PRU00448"/>
    </source>
</evidence>
<evidence type="ECO:0000269" key="3">
    <source>
    </source>
</evidence>
<evidence type="ECO:0000305" key="4"/>
<reference key="1">
    <citation type="journal article" date="2008" name="Gene">
        <title>Expression analysis of the calcineurin B-like gene family in rice (Oryza sativa L.) under environmental stresses.</title>
        <authorList>
            <person name="Gu Z."/>
            <person name="Ma B."/>
            <person name="Jiang Y."/>
            <person name="Chen Z."/>
            <person name="Su X."/>
            <person name="Zhang H."/>
        </authorList>
    </citation>
    <scope>NUCLEOTIDE SEQUENCE [MRNA]</scope>
    <scope>TISSUE SPECIFICITY</scope>
    <scope>INDUCTION</scope>
    <scope>GENE FAMILY</scope>
    <source>
        <strain>cv. Nipponbare</strain>
        <tissue>Seedling</tissue>
    </source>
</reference>
<reference key="2">
    <citation type="journal article" date="2002" name="Nature">
        <title>The genome sequence and structure of rice chromosome 1.</title>
        <authorList>
            <person name="Sasaki T."/>
            <person name="Matsumoto T."/>
            <person name="Yamamoto K."/>
            <person name="Sakata K."/>
            <person name="Baba T."/>
            <person name="Katayose Y."/>
            <person name="Wu J."/>
            <person name="Niimura Y."/>
            <person name="Cheng Z."/>
            <person name="Nagamura Y."/>
            <person name="Antonio B.A."/>
            <person name="Kanamori H."/>
            <person name="Hosokawa S."/>
            <person name="Masukawa M."/>
            <person name="Arikawa K."/>
            <person name="Chiden Y."/>
            <person name="Hayashi M."/>
            <person name="Okamoto M."/>
            <person name="Ando T."/>
            <person name="Aoki H."/>
            <person name="Arita K."/>
            <person name="Hamada M."/>
            <person name="Harada C."/>
            <person name="Hijishita S."/>
            <person name="Honda M."/>
            <person name="Ichikawa Y."/>
            <person name="Idonuma A."/>
            <person name="Iijima M."/>
            <person name="Ikeda M."/>
            <person name="Ikeno M."/>
            <person name="Ito S."/>
            <person name="Ito T."/>
            <person name="Ito Y."/>
            <person name="Ito Y."/>
            <person name="Iwabuchi A."/>
            <person name="Kamiya K."/>
            <person name="Karasawa W."/>
            <person name="Katagiri S."/>
            <person name="Kikuta A."/>
            <person name="Kobayashi N."/>
            <person name="Kono I."/>
            <person name="Machita K."/>
            <person name="Maehara T."/>
            <person name="Mizuno H."/>
            <person name="Mizubayashi T."/>
            <person name="Mukai Y."/>
            <person name="Nagasaki H."/>
            <person name="Nakashima M."/>
            <person name="Nakama Y."/>
            <person name="Nakamichi Y."/>
            <person name="Nakamura M."/>
            <person name="Namiki N."/>
            <person name="Negishi M."/>
            <person name="Ohta I."/>
            <person name="Ono N."/>
            <person name="Saji S."/>
            <person name="Sakai K."/>
            <person name="Shibata M."/>
            <person name="Shimokawa T."/>
            <person name="Shomura A."/>
            <person name="Song J."/>
            <person name="Takazaki Y."/>
            <person name="Terasawa K."/>
            <person name="Tsuji K."/>
            <person name="Waki K."/>
            <person name="Yamagata H."/>
            <person name="Yamane H."/>
            <person name="Yoshiki S."/>
            <person name="Yoshihara R."/>
            <person name="Yukawa K."/>
            <person name="Zhong H."/>
            <person name="Iwama H."/>
            <person name="Endo T."/>
            <person name="Ito H."/>
            <person name="Hahn J.H."/>
            <person name="Kim H.-I."/>
            <person name="Eun M.-Y."/>
            <person name="Yano M."/>
            <person name="Jiang J."/>
            <person name="Gojobori T."/>
        </authorList>
    </citation>
    <scope>NUCLEOTIDE SEQUENCE [LARGE SCALE GENOMIC DNA]</scope>
    <source>
        <strain>cv. Nipponbare</strain>
    </source>
</reference>
<reference key="3">
    <citation type="journal article" date="2005" name="Nature">
        <title>The map-based sequence of the rice genome.</title>
        <authorList>
            <consortium name="International rice genome sequencing project (IRGSP)"/>
        </authorList>
    </citation>
    <scope>NUCLEOTIDE SEQUENCE [LARGE SCALE GENOMIC DNA]</scope>
    <source>
        <strain>cv. Nipponbare</strain>
    </source>
</reference>
<reference key="4">
    <citation type="journal article" date="2008" name="Nucleic Acids Res.">
        <title>The rice annotation project database (RAP-DB): 2008 update.</title>
        <authorList>
            <consortium name="The rice annotation project (RAP)"/>
        </authorList>
    </citation>
    <scope>GENOME REANNOTATION</scope>
    <source>
        <strain>cv. Nipponbare</strain>
    </source>
</reference>
<reference key="5">
    <citation type="journal article" date="2013" name="Rice">
        <title>Improvement of the Oryza sativa Nipponbare reference genome using next generation sequence and optical map data.</title>
        <authorList>
            <person name="Kawahara Y."/>
            <person name="de la Bastide M."/>
            <person name="Hamilton J.P."/>
            <person name="Kanamori H."/>
            <person name="McCombie W.R."/>
            <person name="Ouyang S."/>
            <person name="Schwartz D.C."/>
            <person name="Tanaka T."/>
            <person name="Wu J."/>
            <person name="Zhou S."/>
            <person name="Childs K.L."/>
            <person name="Davidson R.M."/>
            <person name="Lin H."/>
            <person name="Quesada-Ocampo L."/>
            <person name="Vaillancourt B."/>
            <person name="Sakai H."/>
            <person name="Lee S.S."/>
            <person name="Kim J."/>
            <person name="Numa H."/>
            <person name="Itoh T."/>
            <person name="Buell C.R."/>
            <person name="Matsumoto T."/>
        </authorList>
    </citation>
    <scope>GENOME REANNOTATION</scope>
    <source>
        <strain>cv. Nipponbare</strain>
    </source>
</reference>
<reference key="6">
    <citation type="journal article" date="2005" name="PLoS Biol.">
        <title>The genomes of Oryza sativa: a history of duplications.</title>
        <authorList>
            <person name="Yu J."/>
            <person name="Wang J."/>
            <person name="Lin W."/>
            <person name="Li S."/>
            <person name="Li H."/>
            <person name="Zhou J."/>
            <person name="Ni P."/>
            <person name="Dong W."/>
            <person name="Hu S."/>
            <person name="Zeng C."/>
            <person name="Zhang J."/>
            <person name="Zhang Y."/>
            <person name="Li R."/>
            <person name="Xu Z."/>
            <person name="Li S."/>
            <person name="Li X."/>
            <person name="Zheng H."/>
            <person name="Cong L."/>
            <person name="Lin L."/>
            <person name="Yin J."/>
            <person name="Geng J."/>
            <person name="Li G."/>
            <person name="Shi J."/>
            <person name="Liu J."/>
            <person name="Lv H."/>
            <person name="Li J."/>
            <person name="Wang J."/>
            <person name="Deng Y."/>
            <person name="Ran L."/>
            <person name="Shi X."/>
            <person name="Wang X."/>
            <person name="Wu Q."/>
            <person name="Li C."/>
            <person name="Ren X."/>
            <person name="Wang J."/>
            <person name="Wang X."/>
            <person name="Li D."/>
            <person name="Liu D."/>
            <person name="Zhang X."/>
            <person name="Ji Z."/>
            <person name="Zhao W."/>
            <person name="Sun Y."/>
            <person name="Zhang Z."/>
            <person name="Bao J."/>
            <person name="Han Y."/>
            <person name="Dong L."/>
            <person name="Ji J."/>
            <person name="Chen P."/>
            <person name="Wu S."/>
            <person name="Liu J."/>
            <person name="Xiao Y."/>
            <person name="Bu D."/>
            <person name="Tan J."/>
            <person name="Yang L."/>
            <person name="Ye C."/>
            <person name="Zhang J."/>
            <person name="Xu J."/>
            <person name="Zhou Y."/>
            <person name="Yu Y."/>
            <person name="Zhang B."/>
            <person name="Zhuang S."/>
            <person name="Wei H."/>
            <person name="Liu B."/>
            <person name="Lei M."/>
            <person name="Yu H."/>
            <person name="Li Y."/>
            <person name="Xu H."/>
            <person name="Wei S."/>
            <person name="He X."/>
            <person name="Fang L."/>
            <person name="Zhang Z."/>
            <person name="Zhang Y."/>
            <person name="Huang X."/>
            <person name="Su Z."/>
            <person name="Tong W."/>
            <person name="Li J."/>
            <person name="Tong Z."/>
            <person name="Li S."/>
            <person name="Ye J."/>
            <person name="Wang L."/>
            <person name="Fang L."/>
            <person name="Lei T."/>
            <person name="Chen C.-S."/>
            <person name="Chen H.-C."/>
            <person name="Xu Z."/>
            <person name="Li H."/>
            <person name="Huang H."/>
            <person name="Zhang F."/>
            <person name="Xu H."/>
            <person name="Li N."/>
            <person name="Zhao C."/>
            <person name="Li S."/>
            <person name="Dong L."/>
            <person name="Huang Y."/>
            <person name="Li L."/>
            <person name="Xi Y."/>
            <person name="Qi Q."/>
            <person name="Li W."/>
            <person name="Zhang B."/>
            <person name="Hu W."/>
            <person name="Zhang Y."/>
            <person name="Tian X."/>
            <person name="Jiao Y."/>
            <person name="Liang X."/>
            <person name="Jin J."/>
            <person name="Gao L."/>
            <person name="Zheng W."/>
            <person name="Hao B."/>
            <person name="Liu S.-M."/>
            <person name="Wang W."/>
            <person name="Yuan L."/>
            <person name="Cao M."/>
            <person name="McDermott J."/>
            <person name="Samudrala R."/>
            <person name="Wang J."/>
            <person name="Wong G.K.-S."/>
            <person name="Yang H."/>
        </authorList>
    </citation>
    <scope>NUCLEOTIDE SEQUENCE [LARGE SCALE GENOMIC DNA]</scope>
    <source>
        <strain>cv. Nipponbare</strain>
    </source>
</reference>
<reference key="7">
    <citation type="journal article" date="2004" name="Plant Physiol.">
        <title>Calcium sensors and their interacting protein kinases: genomics of the Arabidopsis and rice CBL-CIPK signaling networks.</title>
        <authorList>
            <person name="Kolukisaoglu U."/>
            <person name="Weinl S."/>
            <person name="Blazevic D."/>
            <person name="Batistic O."/>
            <person name="Kudla J."/>
        </authorList>
    </citation>
    <scope>GENE FAMILY</scope>
    <scope>NOMENCLATURE</scope>
</reference>
<reference key="8">
    <citation type="journal article" date="2005" name="Plant Physiol.">
        <title>A gibberellin-regulated calcineurin B in rice localizes to the tonoplast and is implicated in vacuole function.</title>
        <authorList>
            <person name="Hwang Y.-S."/>
            <person name="Bethke P.C."/>
            <person name="Cheong Y.H."/>
            <person name="Chang H.-S."/>
            <person name="Zhu T."/>
            <person name="Jones R.L."/>
        </authorList>
    </citation>
    <scope>GENE FAMILY</scope>
</reference>
<name>CNBLA_ORYSJ</name>
<dbReference type="EMBL" id="DQ201204">
    <property type="protein sequence ID" value="ABA54185.1"/>
    <property type="molecule type" value="mRNA"/>
</dbReference>
<dbReference type="EMBL" id="AP002901">
    <property type="protein sequence ID" value="BAD81532.1"/>
    <property type="status" value="ALT_INIT"/>
    <property type="molecule type" value="Genomic_DNA"/>
</dbReference>
<dbReference type="EMBL" id="AP003410">
    <property type="protein sequence ID" value="BAD82267.1"/>
    <property type="status" value="ALT_INIT"/>
    <property type="molecule type" value="Genomic_DNA"/>
</dbReference>
<dbReference type="EMBL" id="AP008207">
    <property type="protein sequence ID" value="BAF05961.1"/>
    <property type="status" value="ALT_SEQ"/>
    <property type="molecule type" value="Genomic_DNA"/>
</dbReference>
<dbReference type="EMBL" id="AP014957">
    <property type="protein sequence ID" value="BAS73985.1"/>
    <property type="molecule type" value="Genomic_DNA"/>
</dbReference>
<dbReference type="EMBL" id="CM000138">
    <property type="protein sequence ID" value="EAZ13294.1"/>
    <property type="status" value="ALT_SEQ"/>
    <property type="molecule type" value="Genomic_DNA"/>
</dbReference>
<dbReference type="RefSeq" id="XP_015650521.1">
    <property type="nucleotide sequence ID" value="XM_015795035.1"/>
</dbReference>
<dbReference type="SMR" id="Q3HRN7"/>
<dbReference type="FunCoup" id="Q3HRN7">
    <property type="interactions" value="659"/>
</dbReference>
<dbReference type="STRING" id="39947.Q3HRN7"/>
<dbReference type="PaxDb" id="39947-Q3HRN7"/>
<dbReference type="EnsemblPlants" id="Os01t0711500-01">
    <property type="protein sequence ID" value="Os01t0711500-01"/>
    <property type="gene ID" value="Os01g0711500"/>
</dbReference>
<dbReference type="Gramene" id="Os01t0711500-01">
    <property type="protein sequence ID" value="Os01t0711500-01"/>
    <property type="gene ID" value="Os01g0711500"/>
</dbReference>
<dbReference type="KEGG" id="dosa:Os01g0711500"/>
<dbReference type="eggNOG" id="KOG0034">
    <property type="taxonomic scope" value="Eukaryota"/>
</dbReference>
<dbReference type="HOGENOM" id="CLU_061288_21_0_1"/>
<dbReference type="InParanoid" id="Q3HRN7"/>
<dbReference type="OMA" id="FIFNTQV"/>
<dbReference type="OrthoDB" id="191686at2759"/>
<dbReference type="Proteomes" id="UP000000763">
    <property type="component" value="Chromosome 1"/>
</dbReference>
<dbReference type="Proteomes" id="UP000007752">
    <property type="component" value="Chromosome 1"/>
</dbReference>
<dbReference type="Proteomes" id="UP000059680">
    <property type="component" value="Chromosome 1"/>
</dbReference>
<dbReference type="GO" id="GO:0005509">
    <property type="term" value="F:calcium ion binding"/>
    <property type="evidence" value="ECO:0007669"/>
    <property type="project" value="InterPro"/>
</dbReference>
<dbReference type="GO" id="GO:0019900">
    <property type="term" value="F:kinase binding"/>
    <property type="evidence" value="ECO:0007669"/>
    <property type="project" value="InterPro"/>
</dbReference>
<dbReference type="GO" id="GO:0019722">
    <property type="term" value="P:calcium-mediated signaling"/>
    <property type="evidence" value="ECO:0007669"/>
    <property type="project" value="InterPro"/>
</dbReference>
<dbReference type="CDD" id="cd00051">
    <property type="entry name" value="EFh"/>
    <property type="match status" value="1"/>
</dbReference>
<dbReference type="FunFam" id="1.10.238.10:FF:000073">
    <property type="entry name" value="calcineurin B-like protein 3"/>
    <property type="match status" value="1"/>
</dbReference>
<dbReference type="Gene3D" id="1.10.238.10">
    <property type="entry name" value="EF-hand"/>
    <property type="match status" value="1"/>
</dbReference>
<dbReference type="InterPro" id="IPR045198">
    <property type="entry name" value="CNBL1-10"/>
</dbReference>
<dbReference type="InterPro" id="IPR011992">
    <property type="entry name" value="EF-hand-dom_pair"/>
</dbReference>
<dbReference type="InterPro" id="IPR018247">
    <property type="entry name" value="EF_Hand_1_Ca_BS"/>
</dbReference>
<dbReference type="InterPro" id="IPR002048">
    <property type="entry name" value="EF_hand_dom"/>
</dbReference>
<dbReference type="PANTHER" id="PTHR23056">
    <property type="entry name" value="CALCINEURIN B"/>
    <property type="match status" value="1"/>
</dbReference>
<dbReference type="PANTHER" id="PTHR23056:SF97">
    <property type="entry name" value="CALCINEURIN B-LIKE PROTEIN 10"/>
    <property type="match status" value="1"/>
</dbReference>
<dbReference type="Pfam" id="PF13499">
    <property type="entry name" value="EF-hand_7"/>
    <property type="match status" value="1"/>
</dbReference>
<dbReference type="PRINTS" id="PR00450">
    <property type="entry name" value="RECOVERIN"/>
</dbReference>
<dbReference type="SMART" id="SM00054">
    <property type="entry name" value="EFh"/>
    <property type="match status" value="3"/>
</dbReference>
<dbReference type="SUPFAM" id="SSF47473">
    <property type="entry name" value="EF-hand"/>
    <property type="match status" value="1"/>
</dbReference>
<dbReference type="PROSITE" id="PS00018">
    <property type="entry name" value="EF_HAND_1"/>
    <property type="match status" value="1"/>
</dbReference>
<dbReference type="PROSITE" id="PS50222">
    <property type="entry name" value="EF_HAND_2"/>
    <property type="match status" value="3"/>
</dbReference>
<organism>
    <name type="scientific">Oryza sativa subsp. japonica</name>
    <name type="common">Rice</name>
    <dbReference type="NCBI Taxonomy" id="39947"/>
    <lineage>
        <taxon>Eukaryota</taxon>
        <taxon>Viridiplantae</taxon>
        <taxon>Streptophyta</taxon>
        <taxon>Embryophyta</taxon>
        <taxon>Tracheophyta</taxon>
        <taxon>Spermatophyta</taxon>
        <taxon>Magnoliopsida</taxon>
        <taxon>Liliopsida</taxon>
        <taxon>Poales</taxon>
        <taxon>Poaceae</taxon>
        <taxon>BOP clade</taxon>
        <taxon>Oryzoideae</taxon>
        <taxon>Oryzeae</taxon>
        <taxon>Oryzinae</taxon>
        <taxon>Oryza</taxon>
        <taxon>Oryza sativa</taxon>
    </lineage>
</organism>
<keyword id="KW-0106">Calcium</keyword>
<keyword id="KW-0479">Metal-binding</keyword>
<keyword id="KW-1185">Reference proteome</keyword>
<keyword id="KW-0677">Repeat</keyword>
<protein>
    <recommendedName>
        <fullName>Calcineurin B-like protein 10</fullName>
    </recommendedName>
</protein>
<feature type="chain" id="PRO_0000337773" description="Calcineurin B-like protein 10">
    <location>
        <begin position="1"/>
        <end position="266"/>
    </location>
</feature>
<feature type="domain" description="EF-hand 1" evidence="4">
    <location>
        <begin position="87"/>
        <end position="122"/>
    </location>
</feature>
<feature type="domain" description="EF-hand 2" evidence="2">
    <location>
        <begin position="123"/>
        <end position="158"/>
    </location>
</feature>
<feature type="domain" description="EF-hand 3" evidence="2">
    <location>
        <begin position="160"/>
        <end position="195"/>
    </location>
</feature>
<feature type="domain" description="EF-hand 4" evidence="2">
    <location>
        <begin position="204"/>
        <end position="239"/>
    </location>
</feature>
<feature type="binding site" evidence="2">
    <location>
        <position position="217"/>
    </location>
    <ligand>
        <name>Ca(2+)</name>
        <dbReference type="ChEBI" id="CHEBI:29108"/>
    </ligand>
</feature>
<feature type="binding site" evidence="2">
    <location>
        <position position="219"/>
    </location>
    <ligand>
        <name>Ca(2+)</name>
        <dbReference type="ChEBI" id="CHEBI:29108"/>
    </ligand>
</feature>
<feature type="binding site" evidence="2">
    <location>
        <position position="221"/>
    </location>
    <ligand>
        <name>Ca(2+)</name>
        <dbReference type="ChEBI" id="CHEBI:29108"/>
    </ligand>
</feature>
<feature type="binding site" evidence="2">
    <location>
        <position position="223"/>
    </location>
    <ligand>
        <name>Ca(2+)</name>
        <dbReference type="ChEBI" id="CHEBI:29108"/>
    </ligand>
</feature>
<feature type="binding site" evidence="2">
    <location>
        <position position="228"/>
    </location>
    <ligand>
        <name>Ca(2+)</name>
        <dbReference type="ChEBI" id="CHEBI:29108"/>
    </ligand>
</feature>
<feature type="site" description="Involved in dimerization" evidence="1">
    <location>
        <position position="196"/>
    </location>
</feature>
<comment type="function">
    <text evidence="1">Acts as a calcium sensor. CBL proteins interact with CIPK serine-threonine protein kinases. Binding of a CBL protein to the regulatory NAF domain of a CIPK protein lead to the activation of the kinase in a calcium-dependent manner (By similarity).</text>
</comment>
<comment type="subunit">
    <text evidence="1">Homodimer.</text>
</comment>
<comment type="tissue specificity">
    <text evidence="3">Expressed in shoots, culms, leaves and young spikelets.</text>
</comment>
<comment type="induction">
    <text evidence="3">By cold and drought stresses.</text>
</comment>
<comment type="similarity">
    <text evidence="4">Belongs to the calcineurin regulatory subunit family.</text>
</comment>
<comment type="sequence caution" evidence="4">
    <conflict type="erroneous initiation">
        <sequence resource="EMBL-CDS" id="BAD81532"/>
    </conflict>
</comment>
<comment type="sequence caution" evidence="4">
    <conflict type="erroneous initiation">
        <sequence resource="EMBL-CDS" id="BAD82267"/>
    </conflict>
</comment>
<comment type="sequence caution" evidence="4">
    <conflict type="erroneous gene model prediction">
        <sequence resource="EMBL-CDS" id="BAF05961"/>
    </conflict>
</comment>
<comment type="sequence caution" evidence="4">
    <conflict type="erroneous gene model prediction">
        <sequence resource="EMBL-CDS" id="EAZ13294"/>
    </conflict>
</comment>
<accession>Q3HRN7</accession>
<accession>A0A0N7KDL9</accession>
<accession>Q0JJW7</accession>
<accession>Q5N8E2</accession>
<gene>
    <name type="primary">CBL10</name>
    <name type="ordered locus">Os01g0711500</name>
    <name type="ordered locus">LOC_Os01g51420</name>
    <name type="ORF">B1142C05.7</name>
    <name type="ORF">OsJ_003119</name>
    <name type="ORF">P0456F08.32</name>
</gene>
<proteinExistence type="evidence at transcript level"/>
<sequence>MDSSRSSNSLDSGSSLTLGELACAALIPVLALVDAVVFAAAQCFQKRPPGLLPATLAARARRRAGGRLTFRELADLADESRCFSVNEVEALYELYKKISCSIVDDGLIHKEELQLALFRTPAGKNLFLDRVFDLFDEKKNSVIEFEEFIHAISVFHPNTPLEDKIDFSFRLYDLRQTGFIEREEVKQMVVATLLESEVQLSDDLVEAILDKTFEDADTDKDNRISKEEWKAFVLKHPSVIKKMTLPTLKDTTAAFPSFIFNTQVED</sequence>